<reference key="1">
    <citation type="submission" date="2008-05" db="EMBL/GenBank/DDBJ databases">
        <title>Genome sequence of Clostridium botulinum Ba4 strain 657.</title>
        <authorList>
            <person name="Shrivastava S."/>
            <person name="Brown J.L."/>
            <person name="Bruce D."/>
            <person name="Detter C."/>
            <person name="Munk C."/>
            <person name="Smith L.A."/>
            <person name="Smith T.J."/>
            <person name="Sutton G."/>
            <person name="Brettin T.S."/>
        </authorList>
    </citation>
    <scope>NUCLEOTIDE SEQUENCE [LARGE SCALE GENOMIC DNA]</scope>
    <source>
        <strain>657 / Type Ba4</strain>
    </source>
</reference>
<comment type="function">
    <text evidence="1">Molecular chaperone. Has ATPase activity.</text>
</comment>
<comment type="subunit">
    <text evidence="1">Homodimer.</text>
</comment>
<comment type="subcellular location">
    <subcellularLocation>
        <location evidence="1">Cytoplasm</location>
    </subcellularLocation>
</comment>
<comment type="similarity">
    <text evidence="1">Belongs to the heat shock protein 90 family.</text>
</comment>
<protein>
    <recommendedName>
        <fullName evidence="1">Chaperone protein HtpG</fullName>
    </recommendedName>
    <alternativeName>
        <fullName evidence="1">Heat shock protein HtpG</fullName>
    </alternativeName>
    <alternativeName>
        <fullName evidence="1">High temperature protein G</fullName>
    </alternativeName>
</protein>
<evidence type="ECO:0000255" key="1">
    <source>
        <dbReference type="HAMAP-Rule" id="MF_00505"/>
    </source>
</evidence>
<dbReference type="EMBL" id="CP001083">
    <property type="protein sequence ID" value="ACQ51783.1"/>
    <property type="molecule type" value="Genomic_DNA"/>
</dbReference>
<dbReference type="RefSeq" id="WP_003362922.1">
    <property type="nucleotide sequence ID" value="NC_012658.1"/>
</dbReference>
<dbReference type="SMR" id="C3KXP4"/>
<dbReference type="KEGG" id="cbi:CLJ_B2190"/>
<dbReference type="HOGENOM" id="CLU_006684_3_0_9"/>
<dbReference type="Proteomes" id="UP000002333">
    <property type="component" value="Chromosome"/>
</dbReference>
<dbReference type="GO" id="GO:0005737">
    <property type="term" value="C:cytoplasm"/>
    <property type="evidence" value="ECO:0007669"/>
    <property type="project" value="UniProtKB-SubCell"/>
</dbReference>
<dbReference type="GO" id="GO:0005524">
    <property type="term" value="F:ATP binding"/>
    <property type="evidence" value="ECO:0007669"/>
    <property type="project" value="UniProtKB-UniRule"/>
</dbReference>
<dbReference type="GO" id="GO:0016887">
    <property type="term" value="F:ATP hydrolysis activity"/>
    <property type="evidence" value="ECO:0007669"/>
    <property type="project" value="InterPro"/>
</dbReference>
<dbReference type="GO" id="GO:0140662">
    <property type="term" value="F:ATP-dependent protein folding chaperone"/>
    <property type="evidence" value="ECO:0007669"/>
    <property type="project" value="InterPro"/>
</dbReference>
<dbReference type="GO" id="GO:0051082">
    <property type="term" value="F:unfolded protein binding"/>
    <property type="evidence" value="ECO:0007669"/>
    <property type="project" value="UniProtKB-UniRule"/>
</dbReference>
<dbReference type="CDD" id="cd16927">
    <property type="entry name" value="HATPase_Hsp90-like"/>
    <property type="match status" value="1"/>
</dbReference>
<dbReference type="FunFam" id="1.20.120.790:FF:000006">
    <property type="entry name" value="Chaperone protein HtpG"/>
    <property type="match status" value="1"/>
</dbReference>
<dbReference type="FunFam" id="3.40.50.11260:FF:000008">
    <property type="entry name" value="Chaperone protein HtpG"/>
    <property type="match status" value="1"/>
</dbReference>
<dbReference type="FunFam" id="3.30.565.10:FF:000054">
    <property type="entry name" value="Heat shock protein 90"/>
    <property type="match status" value="1"/>
</dbReference>
<dbReference type="FunFam" id="3.30.230.80:FF:000002">
    <property type="entry name" value="Molecular chaperone HtpG"/>
    <property type="match status" value="1"/>
</dbReference>
<dbReference type="Gene3D" id="3.30.230.80">
    <property type="match status" value="1"/>
</dbReference>
<dbReference type="Gene3D" id="3.40.50.11260">
    <property type="match status" value="1"/>
</dbReference>
<dbReference type="Gene3D" id="1.20.120.790">
    <property type="entry name" value="Heat shock protein 90, C-terminal domain"/>
    <property type="match status" value="1"/>
</dbReference>
<dbReference type="Gene3D" id="3.30.565.10">
    <property type="entry name" value="Histidine kinase-like ATPase, C-terminal domain"/>
    <property type="match status" value="1"/>
</dbReference>
<dbReference type="HAMAP" id="MF_00505">
    <property type="entry name" value="HSP90"/>
    <property type="match status" value="1"/>
</dbReference>
<dbReference type="InterPro" id="IPR036890">
    <property type="entry name" value="HATPase_C_sf"/>
</dbReference>
<dbReference type="InterPro" id="IPR019805">
    <property type="entry name" value="Heat_shock_protein_90_CS"/>
</dbReference>
<dbReference type="InterPro" id="IPR037196">
    <property type="entry name" value="HSP90_C"/>
</dbReference>
<dbReference type="InterPro" id="IPR001404">
    <property type="entry name" value="Hsp90_fam"/>
</dbReference>
<dbReference type="InterPro" id="IPR020575">
    <property type="entry name" value="Hsp90_N"/>
</dbReference>
<dbReference type="InterPro" id="IPR020568">
    <property type="entry name" value="Ribosomal_Su5_D2-typ_SF"/>
</dbReference>
<dbReference type="NCBIfam" id="NF003555">
    <property type="entry name" value="PRK05218.1"/>
    <property type="match status" value="1"/>
</dbReference>
<dbReference type="PANTHER" id="PTHR11528">
    <property type="entry name" value="HEAT SHOCK PROTEIN 90 FAMILY MEMBER"/>
    <property type="match status" value="1"/>
</dbReference>
<dbReference type="Pfam" id="PF13589">
    <property type="entry name" value="HATPase_c_3"/>
    <property type="match status" value="1"/>
</dbReference>
<dbReference type="Pfam" id="PF00183">
    <property type="entry name" value="HSP90"/>
    <property type="match status" value="2"/>
</dbReference>
<dbReference type="PIRSF" id="PIRSF002583">
    <property type="entry name" value="Hsp90"/>
    <property type="match status" value="1"/>
</dbReference>
<dbReference type="PRINTS" id="PR00775">
    <property type="entry name" value="HEATSHOCK90"/>
</dbReference>
<dbReference type="SUPFAM" id="SSF55874">
    <property type="entry name" value="ATPase domain of HSP90 chaperone/DNA topoisomerase II/histidine kinase"/>
    <property type="match status" value="1"/>
</dbReference>
<dbReference type="SUPFAM" id="SSF110942">
    <property type="entry name" value="HSP90 C-terminal domain"/>
    <property type="match status" value="1"/>
</dbReference>
<dbReference type="SUPFAM" id="SSF54211">
    <property type="entry name" value="Ribosomal protein S5 domain 2-like"/>
    <property type="match status" value="1"/>
</dbReference>
<dbReference type="PROSITE" id="PS00298">
    <property type="entry name" value="HSP90"/>
    <property type="match status" value="1"/>
</dbReference>
<organism>
    <name type="scientific">Clostridium botulinum (strain 657 / Type Ba4)</name>
    <dbReference type="NCBI Taxonomy" id="515621"/>
    <lineage>
        <taxon>Bacteria</taxon>
        <taxon>Bacillati</taxon>
        <taxon>Bacillota</taxon>
        <taxon>Clostridia</taxon>
        <taxon>Eubacteriales</taxon>
        <taxon>Clostridiaceae</taxon>
        <taxon>Clostridium</taxon>
    </lineage>
</organism>
<gene>
    <name evidence="1" type="primary">htpG</name>
    <name type="ordered locus">CLJ_B2190</name>
</gene>
<accession>C3KXP4</accession>
<name>HTPG_CLOB6</name>
<feature type="chain" id="PRO_1000206568" description="Chaperone protein HtpG">
    <location>
        <begin position="1"/>
        <end position="626"/>
    </location>
</feature>
<feature type="region of interest" description="A; substrate-binding" evidence="1">
    <location>
        <begin position="1"/>
        <end position="341"/>
    </location>
</feature>
<feature type="region of interest" description="B" evidence="1">
    <location>
        <begin position="342"/>
        <end position="552"/>
    </location>
</feature>
<feature type="region of interest" description="C" evidence="1">
    <location>
        <begin position="553"/>
        <end position="626"/>
    </location>
</feature>
<sequence>METKQFKAESKRLLDLMINSIYTHKEIFLRELISNSSDAIDKIYYKTLTDDSLKFERDDYYIRVVSDKENRILKIADTGIGMTKEELENNLGVIAKSGSLQFKKENEVKEGYDIIGQFGVGFYSAFLVSDDVTVISKAFGSNEAYKWNSKGAEGYTIEPCEKEAYGTEIILKIKDNTEEENYDEFLEEYTLKSIIKKYSDFIRYPIKMDLTKTKPKEDNKEEFEEYKEEETINSMVPIWRKNKNELKSEDYENFYAEKHYGFDKPIKYIHTSVDGVVSYNAILFIPETTPYDFYTKEYEKGLELYSSGVLIMNKCGDLLPDYFGFVKGIVDSEDLSLNISREILQHDRQLKLIAKNIKTKIKNELESLLKKERDKYEKFYESFGRQLKYGVYSDFGSNKDILQDLLMFYSSKEKKMVTLAEYVSRMPEEQKYIYYAVGESNERIEKLPQIEGVLDKGYEVLYFTDDIDEFAIKMLMNYKEKEFKSVSSGDLGIEGEEKENTSNSDDKKNKELFESMKDILSGKVKDVRASKRLKNHPVCLANEGELSIEMEKVLNAMPNNQNIKADKVLEININHDVFKSLKEAYEGDKEKLKLYTDLLYNQALLIEGLAINDPVEFTNNICKIMK</sequence>
<keyword id="KW-0067">ATP-binding</keyword>
<keyword id="KW-0143">Chaperone</keyword>
<keyword id="KW-0963">Cytoplasm</keyword>
<keyword id="KW-0547">Nucleotide-binding</keyword>
<keyword id="KW-0346">Stress response</keyword>
<proteinExistence type="inferred from homology"/>